<feature type="chain" id="PRO_0000459362" description="Fatty acid elongase 1">
    <location>
        <begin position="1"/>
        <end position="305"/>
    </location>
</feature>
<feature type="transmembrane region" description="Helical" evidence="3">
    <location>
        <begin position="24"/>
        <end position="44"/>
    </location>
</feature>
<feature type="transmembrane region" description="Helical" evidence="3">
    <location>
        <begin position="80"/>
        <end position="100"/>
    </location>
</feature>
<feature type="transmembrane region" description="Helical" evidence="3">
    <location>
        <begin position="129"/>
        <end position="149"/>
    </location>
</feature>
<feature type="transmembrane region" description="Helical" evidence="3">
    <location>
        <begin position="158"/>
        <end position="178"/>
    </location>
</feature>
<feature type="transmembrane region" description="Helical" evidence="3">
    <location>
        <begin position="183"/>
        <end position="203"/>
    </location>
</feature>
<feature type="transmembrane region" description="Helical" evidence="3">
    <location>
        <begin position="217"/>
        <end position="237"/>
    </location>
</feature>
<feature type="transmembrane region" description="Helical" evidence="3">
    <location>
        <begin position="257"/>
        <end position="277"/>
    </location>
</feature>
<feature type="region of interest" description="Disordered" evidence="6">
    <location>
        <begin position="284"/>
        <end position="305"/>
    </location>
</feature>
<feature type="short sequence motif" description="HxxHH motif" evidence="8">
    <location>
        <begin position="160"/>
        <end position="164"/>
    </location>
</feature>
<feature type="compositionally biased region" description="Polar residues" evidence="6">
    <location>
        <begin position="288"/>
        <end position="299"/>
    </location>
</feature>
<feature type="active site" description="Nucleophile" evidence="1">
    <location>
        <position position="163"/>
    </location>
</feature>
<feature type="glycosylation site" description="N-linked (GlcNAc...) asparagine" evidence="4">
    <location>
        <position position="297"/>
    </location>
</feature>
<dbReference type="EC" id="2.3.1.-" evidence="7"/>
<dbReference type="EMBL" id="CP000070">
    <property type="protein sequence ID" value="AAZ12482.1"/>
    <property type="molecule type" value="Genomic_DNA"/>
</dbReference>
<dbReference type="EMBL" id="AC159450">
    <property type="protein sequence ID" value="AAX70671.1"/>
    <property type="molecule type" value="Genomic_DNA"/>
</dbReference>
<dbReference type="RefSeq" id="XP_846041.1">
    <property type="nucleotide sequence ID" value="XM_840948.1"/>
</dbReference>
<dbReference type="SMR" id="Q57UP8"/>
<dbReference type="FunCoup" id="Q57UP8">
    <property type="interactions" value="171"/>
</dbReference>
<dbReference type="STRING" id="185431.Q57UP8"/>
<dbReference type="PaxDb" id="5691-AAZ12482"/>
<dbReference type="GeneID" id="3658630"/>
<dbReference type="KEGG" id="tbr:Tb927.7.4180"/>
<dbReference type="VEuPathDB" id="TriTrypDB:Tb927.7.4180"/>
<dbReference type="eggNOG" id="KOG3072">
    <property type="taxonomic scope" value="Eukaryota"/>
</dbReference>
<dbReference type="InParanoid" id="Q57UP8"/>
<dbReference type="OMA" id="RTGWYMW"/>
<dbReference type="OrthoDB" id="434092at2759"/>
<dbReference type="UniPathway" id="UPA00094"/>
<dbReference type="Proteomes" id="UP000008524">
    <property type="component" value="Chromosome 7"/>
</dbReference>
<dbReference type="GO" id="GO:0005737">
    <property type="term" value="C:cytoplasm"/>
    <property type="evidence" value="ECO:0000314"/>
    <property type="project" value="GeneDB"/>
</dbReference>
<dbReference type="GO" id="GO:0005789">
    <property type="term" value="C:endoplasmic reticulum membrane"/>
    <property type="evidence" value="ECO:0000318"/>
    <property type="project" value="GO_Central"/>
</dbReference>
<dbReference type="GO" id="GO:0005634">
    <property type="term" value="C:nucleus"/>
    <property type="evidence" value="ECO:0000314"/>
    <property type="project" value="GeneDB"/>
</dbReference>
<dbReference type="GO" id="GO:0009922">
    <property type="term" value="F:fatty acid elongase activity"/>
    <property type="evidence" value="ECO:0000314"/>
    <property type="project" value="GeneDB"/>
</dbReference>
<dbReference type="GO" id="GO:0030497">
    <property type="term" value="P:fatty acid elongation"/>
    <property type="evidence" value="ECO:0000315"/>
    <property type="project" value="GeneDB"/>
</dbReference>
<dbReference type="GO" id="GO:0034625">
    <property type="term" value="P:fatty acid elongation, monounsaturated fatty acid"/>
    <property type="evidence" value="ECO:0000318"/>
    <property type="project" value="GO_Central"/>
</dbReference>
<dbReference type="GO" id="GO:0034626">
    <property type="term" value="P:fatty acid elongation, polyunsaturated fatty acid"/>
    <property type="evidence" value="ECO:0000318"/>
    <property type="project" value="GO_Central"/>
</dbReference>
<dbReference type="GO" id="GO:0019367">
    <property type="term" value="P:fatty acid elongation, saturated fatty acid"/>
    <property type="evidence" value="ECO:0000318"/>
    <property type="project" value="GO_Central"/>
</dbReference>
<dbReference type="GO" id="GO:0042759">
    <property type="term" value="P:long-chain fatty acid biosynthetic process"/>
    <property type="evidence" value="ECO:0000314"/>
    <property type="project" value="GeneDB"/>
</dbReference>
<dbReference type="GO" id="GO:0030148">
    <property type="term" value="P:sphingolipid biosynthetic process"/>
    <property type="evidence" value="ECO:0000318"/>
    <property type="project" value="GO_Central"/>
</dbReference>
<dbReference type="GO" id="GO:0042761">
    <property type="term" value="P:very long-chain fatty acid biosynthetic process"/>
    <property type="evidence" value="ECO:0000318"/>
    <property type="project" value="GO_Central"/>
</dbReference>
<dbReference type="InterPro" id="IPR030457">
    <property type="entry name" value="ELO_CS"/>
</dbReference>
<dbReference type="InterPro" id="IPR002076">
    <property type="entry name" value="ELO_fam"/>
</dbReference>
<dbReference type="PANTHER" id="PTHR11157:SF105">
    <property type="entry name" value="ELONGATION OF FATTY ACIDS PROTEIN"/>
    <property type="match status" value="1"/>
</dbReference>
<dbReference type="PANTHER" id="PTHR11157">
    <property type="entry name" value="FATTY ACID ACYL TRANSFERASE-RELATED"/>
    <property type="match status" value="1"/>
</dbReference>
<dbReference type="Pfam" id="PF01151">
    <property type="entry name" value="ELO"/>
    <property type="match status" value="1"/>
</dbReference>
<dbReference type="PROSITE" id="PS01188">
    <property type="entry name" value="ELO"/>
    <property type="match status" value="1"/>
</dbReference>
<organism evidence="12">
    <name type="scientific">Trypanosoma brucei brucei (strain 927/4 GUTat10.1)</name>
    <dbReference type="NCBI Taxonomy" id="185431"/>
    <lineage>
        <taxon>Eukaryota</taxon>
        <taxon>Discoba</taxon>
        <taxon>Euglenozoa</taxon>
        <taxon>Kinetoplastea</taxon>
        <taxon>Metakinetoplastina</taxon>
        <taxon>Trypanosomatida</taxon>
        <taxon>Trypanosomatidae</taxon>
        <taxon>Trypanosoma</taxon>
    </lineage>
</organism>
<evidence type="ECO:0000250" key="1">
    <source>
        <dbReference type="UniProtKB" id="A1L3X0"/>
    </source>
</evidence>
<evidence type="ECO:0000250" key="2">
    <source>
        <dbReference type="UniProtKB" id="Q4DUK7"/>
    </source>
</evidence>
<evidence type="ECO:0000255" key="3"/>
<evidence type="ECO:0000255" key="4">
    <source>
        <dbReference type="PROSITE-ProRule" id="PRU00498"/>
    </source>
</evidence>
<evidence type="ECO:0000255" key="5">
    <source>
        <dbReference type="RuleBase" id="RU361115"/>
    </source>
</evidence>
<evidence type="ECO:0000256" key="6">
    <source>
        <dbReference type="SAM" id="MobiDB-lite"/>
    </source>
</evidence>
<evidence type="ECO:0000269" key="7">
    <source>
    </source>
</evidence>
<evidence type="ECO:0000303" key="8">
    <source>
    </source>
</evidence>
<evidence type="ECO:0000305" key="9"/>
<evidence type="ECO:0000312" key="10">
    <source>
        <dbReference type="EMBL" id="AAX70671.1"/>
    </source>
</evidence>
<evidence type="ECO:0000312" key="11">
    <source>
        <dbReference type="EMBL" id="AAZ12482.1"/>
    </source>
</evidence>
<evidence type="ECO:0000312" key="12">
    <source>
        <dbReference type="Proteomes" id="UP000008524"/>
    </source>
</evidence>
<accession>Q57UP8</accession>
<accession>D6XIU9</accession>
<comment type="function">
    <text evidence="7">Involved in the synthesis of fatty acids (PubMed:16923389). Elongates C4 fatty acids to C10 (PubMed:16923389).</text>
</comment>
<comment type="catalytic activity">
    <reaction evidence="7">
        <text>an acyl-CoA + malonyl-CoA + H(+) = a 3-oxoacyl-CoA + CO2 + CoA</text>
        <dbReference type="Rhea" id="RHEA:50252"/>
        <dbReference type="ChEBI" id="CHEBI:15378"/>
        <dbReference type="ChEBI" id="CHEBI:16526"/>
        <dbReference type="ChEBI" id="CHEBI:57287"/>
        <dbReference type="ChEBI" id="CHEBI:57384"/>
        <dbReference type="ChEBI" id="CHEBI:58342"/>
        <dbReference type="ChEBI" id="CHEBI:90726"/>
    </reaction>
    <physiologicalReaction direction="left-to-right" evidence="7">
        <dbReference type="Rhea" id="RHEA:50253"/>
    </physiologicalReaction>
</comment>
<comment type="pathway">
    <text evidence="7">Lipid metabolism; fatty acid biosynthesis.</text>
</comment>
<comment type="subcellular location">
    <subcellularLocation>
        <location evidence="2">Endoplasmic reticulum membrane</location>
        <topology evidence="3">Multi-pass membrane protein</topology>
    </subcellularLocation>
</comment>
<comment type="disruption phenotype">
    <text evidence="7">Genetic disruption in bloodstream form parasites reduces fatty acid synthesis from C4- to C12-CoA primers, whereas synthesis from C14- and C16-CoA is less affected (PubMed:16923389). RNAi-mediated knockdown in tsetse fly procyclic form parasites results in reduced fatty acid synthesis (PubMed:16923389).</text>
</comment>
<comment type="similarity">
    <text evidence="5">Belongs to the ELO family.</text>
</comment>
<sequence>MFFTPPQLQKLEQDWNGLAVRDWMIANVDVVLYISFLYLGFVFIGPKLFAKLVGTNPAAAAAGARSADGTGSPIVRRSMVVWNLALSIFSIFGTSTVTPVLLRNLANKGFYGATCDFKETEFYTTNVGFWMGIFALSKIPELVDTIFLVLQGKQELPFLHWYHHVTVLLFSWHTYCVGSSAYIWVAAMNYSVHSVMYLYFALAALGYKRVVRPLAPYITIIQILQMVVGCYVTIFALQELHGEGGRGCGVSPANMRIQLVMYASYLYLFSKMFVASYIRPPKRPTVGGPSSTAGVSNGSVEKKVK</sequence>
<gene>
    <name evidence="8" type="primary">ELO1</name>
    <name evidence="11" type="ORF">Tb07.5F10.370</name>
    <name evidence="10" type="ORF">Tb927.7.4180</name>
</gene>
<protein>
    <recommendedName>
        <fullName evidence="8">Fatty acid elongase 1</fullName>
        <ecNumber evidence="7">2.3.1.-</ecNumber>
    </recommendedName>
    <alternativeName>
        <fullName evidence="8">Beta-ketoacyl-CoA synthase</fullName>
    </alternativeName>
    <alternativeName>
        <fullName evidence="5">Elongation of fatty acids protein</fullName>
    </alternativeName>
</protein>
<reference evidence="11" key="1">
    <citation type="journal article" date="2005" name="Science">
        <title>Comparative genomics of trypanosomatid parasitic protozoa.</title>
        <authorList>
            <person name="El-Sayed N.M."/>
            <person name="Myler P.J."/>
            <person name="Blandin G."/>
            <person name="Berriman M."/>
            <person name="Crabtree J."/>
            <person name="Aggarwal G."/>
            <person name="Caler E."/>
            <person name="Renauld H."/>
            <person name="Worthey E.A."/>
            <person name="Hertz-Fowler C."/>
            <person name="Ghedin E."/>
            <person name="Peacock C."/>
            <person name="Bartholomeu D.C."/>
            <person name="Haas B.J."/>
            <person name="Tran A.N."/>
            <person name="Wortman J.R."/>
            <person name="Alsmark U.C."/>
            <person name="Angiuoli S."/>
            <person name="Anupama A."/>
            <person name="Badger J."/>
            <person name="Bringaud F."/>
            <person name="Cadag E."/>
            <person name="Carlton J.M."/>
            <person name="Cerqueira G.C."/>
            <person name="Creasy T."/>
            <person name="Delcher A.L."/>
            <person name="Djikeng A."/>
            <person name="Embley T.M."/>
            <person name="Hauser C."/>
            <person name="Ivens A.C."/>
            <person name="Kummerfeld S.K."/>
            <person name="Pereira-Leal J.B."/>
            <person name="Nilsson D."/>
            <person name="Peterson J."/>
            <person name="Salzberg S.L."/>
            <person name="Shallom J."/>
            <person name="Silva J.C."/>
            <person name="Sundaram J."/>
            <person name="Westenberger S."/>
            <person name="White O."/>
            <person name="Melville S.E."/>
            <person name="Donelson J.E."/>
            <person name="Andersson B."/>
            <person name="Stuart K.D."/>
            <person name="Hall N."/>
        </authorList>
    </citation>
    <scope>NUCLEOTIDE SEQUENCE [LARGE SCALE GENOMIC DNA]</scope>
    <source>
        <strain evidence="11">927/4 GUTat10.1</strain>
    </source>
</reference>
<reference evidence="12" key="2">
    <citation type="journal article" date="2005" name="Science">
        <title>The genome of the African trypanosome Trypanosoma brucei.</title>
        <authorList>
            <person name="Berriman M."/>
            <person name="Ghedin E."/>
            <person name="Hertz-Fowler C."/>
            <person name="Blandin G."/>
            <person name="Renauld H."/>
            <person name="Bartholomeu D.C."/>
            <person name="Lennard N.J."/>
            <person name="Caler E."/>
            <person name="Hamlin N.E."/>
            <person name="Haas B."/>
            <person name="Bohme U."/>
            <person name="Hannick L."/>
            <person name="Aslett M.A."/>
            <person name="Shallom J."/>
            <person name="Marcello L."/>
            <person name="Hou L."/>
            <person name="Wickstead B."/>
            <person name="Alsmark U.C.M."/>
            <person name="Arrowsmith C."/>
            <person name="Atkin R.J."/>
            <person name="Barron A.J."/>
            <person name="Bringaud F."/>
            <person name="Brooks K."/>
            <person name="Carrington M."/>
            <person name="Cherevach I."/>
            <person name="Chillingworth T.J."/>
            <person name="Churcher C."/>
            <person name="Clark L.N."/>
            <person name="Corton C.H."/>
            <person name="Cronin A."/>
            <person name="Davies R.M."/>
            <person name="Doggett J."/>
            <person name="Djikeng A."/>
            <person name="Feldblyum T."/>
            <person name="Field M.C."/>
            <person name="Fraser A."/>
            <person name="Goodhead I."/>
            <person name="Hance Z."/>
            <person name="Harper D."/>
            <person name="Harris B.R."/>
            <person name="Hauser H."/>
            <person name="Hostetler J."/>
            <person name="Ivens A."/>
            <person name="Jagels K."/>
            <person name="Johnson D."/>
            <person name="Johnson J."/>
            <person name="Jones K."/>
            <person name="Kerhornou A.X."/>
            <person name="Koo H."/>
            <person name="Larke N."/>
            <person name="Landfear S."/>
            <person name="Larkin C."/>
            <person name="Leech V."/>
            <person name="Line A."/>
            <person name="Lord A."/>
            <person name="Macleod A."/>
            <person name="Mooney P.J."/>
            <person name="Moule S."/>
            <person name="Martin D.M."/>
            <person name="Morgan G.W."/>
            <person name="Mungall K."/>
            <person name="Norbertczak H."/>
            <person name="Ormond D."/>
            <person name="Pai G."/>
            <person name="Peacock C.S."/>
            <person name="Peterson J."/>
            <person name="Quail M.A."/>
            <person name="Rabbinowitsch E."/>
            <person name="Rajandream M.A."/>
            <person name="Reitter C."/>
            <person name="Salzberg S.L."/>
            <person name="Sanders M."/>
            <person name="Schobel S."/>
            <person name="Sharp S."/>
            <person name="Simmonds M."/>
            <person name="Simpson A.J."/>
            <person name="Tallon L."/>
            <person name="Turner C.M."/>
            <person name="Tait A."/>
            <person name="Tivey A.R."/>
            <person name="Van Aken S."/>
            <person name="Walker D."/>
            <person name="Wanless D."/>
            <person name="Wang S."/>
            <person name="White B."/>
            <person name="White O."/>
            <person name="Whitehead S."/>
            <person name="Woodward J."/>
            <person name="Wortman J."/>
            <person name="Adams M.D."/>
            <person name="Embley T.M."/>
            <person name="Gull K."/>
            <person name="Ullu E."/>
            <person name="Barry J.D."/>
            <person name="Fairlamb A.H."/>
            <person name="Opperdoes F."/>
            <person name="Barrell B.G."/>
            <person name="Donelson J.E."/>
            <person name="Hall N."/>
            <person name="Fraser C.M."/>
            <person name="Melville S.E."/>
            <person name="El-Sayed N.M.A."/>
        </authorList>
    </citation>
    <scope>NUCLEOTIDE SEQUENCE [LARGE SCALE GENOMIC DNA]</scope>
    <source>
        <strain evidence="12">927/4 GUTat10.1</strain>
    </source>
</reference>
<reference evidence="9" key="3">
    <citation type="journal article" date="2006" name="Cell">
        <title>Fatty acid synthesis by elongases in trypanosomes.</title>
        <authorList>
            <person name="Lee S.H."/>
            <person name="Stephens J.L."/>
            <person name="Paul K.S."/>
            <person name="Englund P.T."/>
        </authorList>
    </citation>
    <scope>FUNCTION</scope>
    <scope>CATALYTIC ACTIVITY</scope>
    <scope>SUBSTRATE SPECIFICITY</scope>
    <scope>PATHWAY</scope>
    <scope>DISRUPTION PHENOTYPE</scope>
</reference>
<keyword id="KW-0256">Endoplasmic reticulum</keyword>
<keyword id="KW-0275">Fatty acid biosynthesis</keyword>
<keyword id="KW-0276">Fatty acid metabolism</keyword>
<keyword id="KW-0325">Glycoprotein</keyword>
<keyword id="KW-0444">Lipid biosynthesis</keyword>
<keyword id="KW-0443">Lipid metabolism</keyword>
<keyword id="KW-0472">Membrane</keyword>
<keyword id="KW-1185">Reference proteome</keyword>
<keyword id="KW-0808">Transferase</keyword>
<keyword id="KW-0812">Transmembrane</keyword>
<keyword id="KW-1133">Transmembrane helix</keyword>
<name>ELO1_TRYB2</name>
<proteinExistence type="evidence at protein level"/>